<organism>
    <name type="scientific">Xenopus laevis</name>
    <name type="common">African clawed frog</name>
    <dbReference type="NCBI Taxonomy" id="8355"/>
    <lineage>
        <taxon>Eukaryota</taxon>
        <taxon>Metazoa</taxon>
        <taxon>Chordata</taxon>
        <taxon>Craniata</taxon>
        <taxon>Vertebrata</taxon>
        <taxon>Euteleostomi</taxon>
        <taxon>Amphibia</taxon>
        <taxon>Batrachia</taxon>
        <taxon>Anura</taxon>
        <taxon>Pipoidea</taxon>
        <taxon>Pipidae</taxon>
        <taxon>Xenopodinae</taxon>
        <taxon>Xenopus</taxon>
        <taxon>Xenopus</taxon>
    </lineage>
</organism>
<comment type="function">
    <text evidence="2 3 5 6">Poly(U)-specific endoribonuclease involved in the processing of intron-encoded box C/D snoRNAs, such as U16 and U86. Releases products that have 2',3'-cyclic phosphate termini at the 3'-end.</text>
</comment>
<comment type="catalytic activity">
    <reaction evidence="2 3">
        <text>uridylyl-uridylyl-ribonucleotide-RNA = a 3'-end uridylyl-2',3'-cyclophospho-uridine-RNA + a 5'-end dephospho-ribonucleoside-RNA</text>
        <dbReference type="Rhea" id="RHEA:67732"/>
        <dbReference type="Rhea" id="RHEA-COMP:13936"/>
        <dbReference type="Rhea" id="RHEA-COMP:17334"/>
        <dbReference type="Rhea" id="RHEA-COMP:17335"/>
        <dbReference type="ChEBI" id="CHEBI:138284"/>
        <dbReference type="ChEBI" id="CHEBI:173079"/>
        <dbReference type="ChEBI" id="CHEBI:173080"/>
    </reaction>
    <physiologicalReaction direction="left-to-right" evidence="8 9">
        <dbReference type="Rhea" id="RHEA:67733"/>
    </physiologicalReaction>
</comment>
<comment type="cofactor">
    <cofactor evidence="2 3 5 6">
        <name>Mn(2+)</name>
        <dbReference type="ChEBI" id="CHEBI:29035"/>
    </cofactor>
    <text evidence="2 3 5 6">In vitro, optimal manganese concentration is in the range of 5-10 mM.</text>
</comment>
<comment type="biophysicochemical properties">
    <phDependence>
        <text evidence="3">Optimum pH is 7.5.</text>
    </phDependence>
</comment>
<comment type="subunit">
    <text evidence="2 4">Monomer.</text>
</comment>
<comment type="subcellular location">
    <subcellularLocation>
        <location evidence="2 5 6">Nucleus</location>
    </subcellularLocation>
</comment>
<comment type="similarity">
    <text evidence="7">Belongs to the ENDOU family.</text>
</comment>
<proteinExistence type="evidence at protein level"/>
<protein>
    <recommendedName>
        <fullName>Poly(U)-specific endoribonuclease-A</fullName>
        <ecNumber evidence="2 3">4.6.1.-</ecNumber>
    </recommendedName>
    <alternativeName>
        <fullName>Protein endoU-A</fullName>
    </alternativeName>
    <alternativeName>
        <fullName>Uridylate-specific endoribonuclease-A</fullName>
    </alternativeName>
    <alternativeName>
        <fullName>XendoU-A</fullName>
    </alternativeName>
</protein>
<keyword id="KW-0002">3D-structure</keyword>
<keyword id="KW-0903">Direct protein sequencing</keyword>
<keyword id="KW-0255">Endonuclease</keyword>
<keyword id="KW-0378">Hydrolase</keyword>
<keyword id="KW-0456">Lyase</keyword>
<keyword id="KW-0464">Manganese</keyword>
<keyword id="KW-0479">Metal-binding</keyword>
<keyword id="KW-0540">Nuclease</keyword>
<keyword id="KW-0539">Nucleus</keyword>
<keyword id="KW-1185">Reference proteome</keyword>
<keyword id="KW-0694">RNA-binding</keyword>
<evidence type="ECO:0000255" key="1">
    <source>
        <dbReference type="PROSITE-ProRule" id="PRU01304"/>
    </source>
</evidence>
<evidence type="ECO:0000269" key="2">
    <source>
    </source>
</evidence>
<evidence type="ECO:0000269" key="3">
    <source>
    </source>
</evidence>
<evidence type="ECO:0000269" key="4">
    <source>
    </source>
</evidence>
<evidence type="ECO:0000269" key="5">
    <source>
    </source>
</evidence>
<evidence type="ECO:0000269" key="6">
    <source>
    </source>
</evidence>
<evidence type="ECO:0000305" key="7"/>
<evidence type="ECO:0000305" key="8">
    <source>
    </source>
</evidence>
<evidence type="ECO:0000305" key="9">
    <source>
    </source>
</evidence>
<evidence type="ECO:0007829" key="10">
    <source>
        <dbReference type="PDB" id="2C1W"/>
    </source>
</evidence>
<name>ENDUA_XENLA</name>
<accession>Q8JFY9</accession>
<sequence length="292" mass="33863">MASNRGQLNHELSKLFNELWDADQNRMKSGKDYRISLQGKAGYVPAGSNQARDSASFPLFQFVDEEKLKSRKTFATFISLLDNYEMDTGVAEVVTPEEIAENNNFLDAILETKVMKMAHDYLVRKNQAKPTRNDFKVQLYNIWFQLYSRAPGSRPDSCGFEHVFVGESKRGQEMMGLHNWVQFYLQEKRKNIDYKGYVARQNKSRPDEDDQVLNLQFNWKEMVKPVGSSFIGVSPEFEFALYTIVFLASQEKMSREVVRLEEYELQIVVNRHGRYIGTAYPVLLSTNNPDLY</sequence>
<gene>
    <name type="primary">endou-a</name>
</gene>
<reference key="1">
    <citation type="journal article" date="2003" name="J. Biol. Chem.">
        <title>Purification, cloning, and characterization of XendoU, a novel endoribonuclease involved in processing of intron-encoded small nucleolar RNAs in Xenopus laevis.</title>
        <authorList>
            <person name="Laneve P."/>
            <person name="Altieri F."/>
            <person name="Fiori M.E."/>
            <person name="Scaloni A."/>
            <person name="Bozzoni I."/>
            <person name="Caffarelli E."/>
        </authorList>
    </citation>
    <scope>NUCLEOTIDE SEQUENCE [MRNA]</scope>
    <scope>FUNCTION</scope>
    <scope>CATALYTIC ACTIVITY</scope>
    <scope>SUBCELLULAR LOCATION</scope>
    <scope>SUBUNIT</scope>
    <scope>COFACTOR</scope>
    <scope>PROTEIN SEQUENCE OF 117-123; 137-142 AND 276-284</scope>
    <source>
        <tissue>Oocyte</tissue>
    </source>
</reference>
<reference key="2">
    <citation type="journal article" date="2005" name="J. Biol. Chem.">
        <title>Functional characterization of XendoU, the endoribonuclease involved in small nucleolar RNA biosynthesis.</title>
        <authorList>
            <person name="Gioia U."/>
            <person name="Laneve P."/>
            <person name="Dlakic M."/>
            <person name="Arceci M."/>
            <person name="Bozzoni I."/>
            <person name="Caffarelli E."/>
        </authorList>
    </citation>
    <scope>NUCLEOTIDE SEQUENCE [MRNA]</scope>
    <scope>FUNCTION</scope>
    <scope>CATALYTIC ACTIVITY</scope>
    <scope>COFACTOR</scope>
    <scope>MUTAGENESIS OF GLU-92; SER-157; GLU-161; HIS-162; GLU-167; HIS-178; LYS-224; GLY-232; SER-234; PRO-235 AND GLU-236</scope>
    <scope>BIOPHYSICOCHEMICAL PROPERTIES</scope>
</reference>
<reference key="3">
    <citation type="journal article" date="1994" name="Mol. Cell. Biol.">
        <title>In vitro study of processing of the intron-encoded U16 small nucleolar RNA in Xenopus laevis.</title>
        <authorList>
            <person name="Caffarelli E."/>
            <person name="Arese M."/>
            <person name="Santoro B."/>
            <person name="Fragapane P."/>
            <person name="Bozzoni I."/>
        </authorList>
    </citation>
    <scope>FUNCTION</scope>
    <scope>COFACTOR</scope>
    <scope>SUBCELLULAR LOCATION</scope>
</reference>
<reference key="4">
    <citation type="journal article" date="1997" name="Biochem. Biophys. Res. Commun.">
        <title>A novel Mn++-dependent ribonuclease that functions in U16 SnoRNA processing in X. laevis.</title>
        <authorList>
            <person name="Caffarelli E."/>
            <person name="Maggi L."/>
            <person name="Fatica A."/>
            <person name="Jiricny J."/>
            <person name="Bozzoni I."/>
        </authorList>
    </citation>
    <scope>FUNCTION</scope>
    <scope>COFACTOR</scope>
    <scope>SUBCELLULAR LOCATION</scope>
</reference>
<reference key="5">
    <citation type="journal article" date="2006" name="Acta Crystallogr. F">
        <title>Large-scale purification and crystallization of the endoribonuclease XendoU: troubleshooting with His-tagged proteins.</title>
        <authorList>
            <person name="Renzi F."/>
            <person name="Panetta G."/>
            <person name="Vallone B."/>
            <person name="Brunori M."/>
            <person name="Arceci M."/>
            <person name="Bozzoni I."/>
            <person name="Laneve P."/>
            <person name="Caffarelli E."/>
        </authorList>
    </citation>
    <scope>PURIFICATION</scope>
    <scope>CRYSTALLIZATION</scope>
</reference>
<reference key="6">
    <citation type="journal article" date="2006" name="Proc. Natl. Acad. Sci. U.S.A.">
        <title>The structure of the endoribonuclease XendoU: from small nucleolar RNA processing to severe acute respiratory syndrome coronavirus replication.</title>
        <authorList>
            <person name="Renzi F."/>
            <person name="Caffarelli E."/>
            <person name="Laneve P."/>
            <person name="Bozzoni I."/>
            <person name="Brunori M."/>
            <person name="Vallone B."/>
        </authorList>
    </citation>
    <scope>X-RAY CRYSTALLOGRAPHY (2.2 ANGSTROMS)</scope>
    <scope>SUBUNIT</scope>
</reference>
<dbReference type="EC" id="4.6.1.-" evidence="2 3"/>
<dbReference type="EMBL" id="AJ507315">
    <property type="protein sequence ID" value="CAD45344.1"/>
    <property type="molecule type" value="mRNA"/>
</dbReference>
<dbReference type="RefSeq" id="NP_001081040.1">
    <property type="nucleotide sequence ID" value="NM_001087571.1"/>
</dbReference>
<dbReference type="PDB" id="2C1W">
    <property type="method" value="X-ray"/>
    <property type="resolution" value="2.20 A"/>
    <property type="chains" value="A/B/C=1-292"/>
</dbReference>
<dbReference type="PDBsum" id="2C1W"/>
<dbReference type="SMR" id="Q8JFY9"/>
<dbReference type="AGR" id="Xenbase:XB-GENE-5883648"/>
<dbReference type="Xenbase" id="XB-GENE-5883648">
    <property type="gene designation" value="endoul.L"/>
</dbReference>
<dbReference type="EvolutionaryTrace" id="Q8JFY9"/>
<dbReference type="Proteomes" id="UP000186698">
    <property type="component" value="Unplaced"/>
</dbReference>
<dbReference type="Bgee" id="394346">
    <property type="expression patterns" value="Expressed in oocyte and 19 other cell types or tissues"/>
</dbReference>
<dbReference type="GO" id="GO:0005634">
    <property type="term" value="C:nucleus"/>
    <property type="evidence" value="ECO:0000314"/>
    <property type="project" value="UniProtKB"/>
</dbReference>
<dbReference type="GO" id="GO:0016829">
    <property type="term" value="F:lyase activity"/>
    <property type="evidence" value="ECO:0007669"/>
    <property type="project" value="UniProtKB-KW"/>
</dbReference>
<dbReference type="GO" id="GO:0030145">
    <property type="term" value="F:manganese ion binding"/>
    <property type="evidence" value="ECO:0000304"/>
    <property type="project" value="UniProtKB"/>
</dbReference>
<dbReference type="GO" id="GO:0003723">
    <property type="term" value="F:RNA binding"/>
    <property type="evidence" value="ECO:0007669"/>
    <property type="project" value="UniProtKB-KW"/>
</dbReference>
<dbReference type="GO" id="GO:0004521">
    <property type="term" value="F:RNA endonuclease activity"/>
    <property type="evidence" value="ECO:0000314"/>
    <property type="project" value="UniProtKB"/>
</dbReference>
<dbReference type="GO" id="GO:0043144">
    <property type="term" value="P:sno(s)RNA processing"/>
    <property type="evidence" value="ECO:0000304"/>
    <property type="project" value="UniProtKB"/>
</dbReference>
<dbReference type="CDD" id="cd21159">
    <property type="entry name" value="XendoU"/>
    <property type="match status" value="1"/>
</dbReference>
<dbReference type="InterPro" id="IPR039787">
    <property type="entry name" value="ENDOU"/>
</dbReference>
<dbReference type="InterPro" id="IPR037227">
    <property type="entry name" value="EndoU-like"/>
</dbReference>
<dbReference type="InterPro" id="IPR018998">
    <property type="entry name" value="EndoU_C"/>
</dbReference>
<dbReference type="PANTHER" id="PTHR12439">
    <property type="entry name" value="PLACENTAL PROTEIN 11-RELATED"/>
    <property type="match status" value="1"/>
</dbReference>
<dbReference type="PANTHER" id="PTHR12439:SF11">
    <property type="entry name" value="URIDYLATE-SPECIFIC ENDORIBONUCLEASE"/>
    <property type="match status" value="1"/>
</dbReference>
<dbReference type="Pfam" id="PF09412">
    <property type="entry name" value="XendoU"/>
    <property type="match status" value="1"/>
</dbReference>
<dbReference type="SUPFAM" id="SSF142877">
    <property type="entry name" value="EndoU-like"/>
    <property type="match status" value="1"/>
</dbReference>
<dbReference type="PROSITE" id="PS51959">
    <property type="entry name" value="ENDOU"/>
    <property type="match status" value="1"/>
</dbReference>
<feature type="chain" id="PRO_0000350627" description="Poly(U)-specific endoribonuclease-A">
    <location>
        <begin position="1"/>
        <end position="292"/>
    </location>
</feature>
<feature type="domain" description="EndoU" evidence="1">
    <location>
        <begin position="8"/>
        <end position="285"/>
    </location>
</feature>
<feature type="active site" evidence="1">
    <location>
        <position position="162"/>
    </location>
</feature>
<feature type="active site" evidence="1">
    <location>
        <position position="178"/>
    </location>
</feature>
<feature type="active site" evidence="1">
    <location>
        <position position="224"/>
    </location>
</feature>
<feature type="mutagenesis site" description="No change in affinity for RNA substrate." evidence="3">
    <original>E</original>
    <variation>Q</variation>
    <location>
        <position position="92"/>
    </location>
</feature>
<feature type="mutagenesis site" description="No change in affinity for RNA substrate." evidence="3">
    <original>S</original>
    <variation>A</variation>
    <location>
        <position position="157"/>
    </location>
</feature>
<feature type="mutagenesis site" description="No effect. Loss of activity and affinity for RNA substrate; when associated with Q-167." evidence="3">
    <original>E</original>
    <variation>Q</variation>
    <location>
        <position position="161"/>
    </location>
</feature>
<feature type="mutagenesis site" description="Loss of catalytic activity and affinity for RNA substrate." evidence="3">
    <original>H</original>
    <variation>A</variation>
    <location>
        <position position="162"/>
    </location>
</feature>
<feature type="mutagenesis site" description="No effect. Loss of activity and affinity for RNA substrate; when associated with Q-161." evidence="3">
    <original>E</original>
    <variation>Q</variation>
    <location>
        <position position="167"/>
    </location>
</feature>
<feature type="mutagenesis site" description="Loss of activity." evidence="3">
    <original>H</original>
    <variation>A</variation>
    <location>
        <position position="178"/>
    </location>
</feature>
<feature type="mutagenesis site" description="Loss of activity." evidence="3">
    <original>K</original>
    <variation>A</variation>
    <location>
        <position position="224"/>
    </location>
</feature>
<feature type="mutagenesis site" description="No change in affinity for RNA substrate." evidence="3">
    <original>G</original>
    <variation>A</variation>
    <location>
        <position position="232"/>
    </location>
</feature>
<feature type="mutagenesis site" description="No change in affinity for RNA substrate." evidence="3">
    <original>S</original>
    <variation>A</variation>
    <location>
        <position position="234"/>
    </location>
</feature>
<feature type="mutagenesis site" description="No change in affinity for RNA substrate." evidence="3">
    <original>P</original>
    <variation>A</variation>
    <location>
        <position position="235"/>
    </location>
</feature>
<feature type="mutagenesis site" description="Shows higher affinity for RNA substrate." evidence="3">
    <original>E</original>
    <variation>Q</variation>
    <location>
        <position position="236"/>
    </location>
</feature>
<feature type="helix" evidence="10">
    <location>
        <begin position="10"/>
        <end position="21"/>
    </location>
</feature>
<feature type="turn" evidence="10">
    <location>
        <begin position="30"/>
        <end position="32"/>
    </location>
</feature>
<feature type="strand" evidence="10">
    <location>
        <begin position="33"/>
        <end position="35"/>
    </location>
</feature>
<feature type="strand" evidence="10">
    <location>
        <begin position="39"/>
        <end position="42"/>
    </location>
</feature>
<feature type="strand" evidence="10">
    <location>
        <begin position="59"/>
        <end position="63"/>
    </location>
</feature>
<feature type="helix" evidence="10">
    <location>
        <begin position="65"/>
        <end position="68"/>
    </location>
</feature>
<feature type="turn" evidence="10">
    <location>
        <begin position="69"/>
        <end position="71"/>
    </location>
</feature>
<feature type="helix" evidence="10">
    <location>
        <begin position="74"/>
        <end position="86"/>
    </location>
</feature>
<feature type="helix" evidence="10">
    <location>
        <begin position="96"/>
        <end position="109"/>
    </location>
</feature>
<feature type="helix" evidence="10">
    <location>
        <begin position="113"/>
        <end position="124"/>
    </location>
</feature>
<feature type="helix" evidence="10">
    <location>
        <begin position="132"/>
        <end position="144"/>
    </location>
</feature>
<feature type="helix" evidence="10">
    <location>
        <begin position="159"/>
        <end position="163"/>
    </location>
</feature>
<feature type="strand" evidence="10">
    <location>
        <begin position="168"/>
        <end position="171"/>
    </location>
</feature>
<feature type="helix" evidence="10">
    <location>
        <begin position="180"/>
        <end position="188"/>
    </location>
</feature>
<feature type="strand" evidence="10">
    <location>
        <begin position="192"/>
        <end position="197"/>
    </location>
</feature>
<feature type="strand" evidence="10">
    <location>
        <begin position="201"/>
        <end position="203"/>
    </location>
</feature>
<feature type="strand" evidence="10">
    <location>
        <begin position="211"/>
        <end position="219"/>
    </location>
</feature>
<feature type="strand" evidence="10">
    <location>
        <begin position="227"/>
        <end position="230"/>
    </location>
</feature>
<feature type="helix" evidence="10">
    <location>
        <begin position="235"/>
        <end position="247"/>
    </location>
</feature>
<feature type="strand" evidence="10">
    <location>
        <begin position="250"/>
        <end position="260"/>
    </location>
</feature>
<feature type="strand" evidence="10">
    <location>
        <begin position="263"/>
        <end position="272"/>
    </location>
</feature>
<feature type="strand" evidence="10">
    <location>
        <begin position="275"/>
        <end position="287"/>
    </location>
</feature>